<proteinExistence type="inferred from homology"/>
<dbReference type="EC" id="2.3.1.275" evidence="1"/>
<dbReference type="EMBL" id="CP000350">
    <property type="protein sequence ID" value="ABJ75667.1"/>
    <property type="molecule type" value="Genomic_DNA"/>
</dbReference>
<dbReference type="RefSeq" id="WP_011670497.1">
    <property type="nucleotide sequence ID" value="NC_008510.1"/>
</dbReference>
<dbReference type="SMR" id="Q04TV3"/>
<dbReference type="KEGG" id="lbj:LBJ_1035"/>
<dbReference type="HOGENOM" id="CLU_081254_7_1_12"/>
<dbReference type="UniPathway" id="UPA00085"/>
<dbReference type="Proteomes" id="UP000000656">
    <property type="component" value="Chromosome 1"/>
</dbReference>
<dbReference type="GO" id="GO:0005886">
    <property type="term" value="C:plasma membrane"/>
    <property type="evidence" value="ECO:0007669"/>
    <property type="project" value="UniProtKB-SubCell"/>
</dbReference>
<dbReference type="GO" id="GO:0043772">
    <property type="term" value="F:acyl-phosphate glycerol-3-phosphate acyltransferase activity"/>
    <property type="evidence" value="ECO:0007669"/>
    <property type="project" value="UniProtKB-UniRule"/>
</dbReference>
<dbReference type="GO" id="GO:0008654">
    <property type="term" value="P:phospholipid biosynthetic process"/>
    <property type="evidence" value="ECO:0007669"/>
    <property type="project" value="UniProtKB-UniRule"/>
</dbReference>
<dbReference type="HAMAP" id="MF_01043">
    <property type="entry name" value="PlsY"/>
    <property type="match status" value="1"/>
</dbReference>
<dbReference type="InterPro" id="IPR003811">
    <property type="entry name" value="G3P_acylTferase_PlsY"/>
</dbReference>
<dbReference type="NCBIfam" id="TIGR00023">
    <property type="entry name" value="glycerol-3-phosphate 1-O-acyltransferase PlsY"/>
    <property type="match status" value="1"/>
</dbReference>
<dbReference type="PANTHER" id="PTHR30309:SF0">
    <property type="entry name" value="GLYCEROL-3-PHOSPHATE ACYLTRANSFERASE-RELATED"/>
    <property type="match status" value="1"/>
</dbReference>
<dbReference type="PANTHER" id="PTHR30309">
    <property type="entry name" value="INNER MEMBRANE PROTEIN YGIH"/>
    <property type="match status" value="1"/>
</dbReference>
<dbReference type="Pfam" id="PF02660">
    <property type="entry name" value="G3P_acyltransf"/>
    <property type="match status" value="1"/>
</dbReference>
<dbReference type="SMART" id="SM01207">
    <property type="entry name" value="G3P_acyltransf"/>
    <property type="match status" value="1"/>
</dbReference>
<keyword id="KW-0997">Cell inner membrane</keyword>
<keyword id="KW-1003">Cell membrane</keyword>
<keyword id="KW-0444">Lipid biosynthesis</keyword>
<keyword id="KW-0443">Lipid metabolism</keyword>
<keyword id="KW-0472">Membrane</keyword>
<keyword id="KW-0594">Phospholipid biosynthesis</keyword>
<keyword id="KW-1208">Phospholipid metabolism</keyword>
<keyword id="KW-0808">Transferase</keyword>
<keyword id="KW-0812">Transmembrane</keyword>
<keyword id="KW-1133">Transmembrane helix</keyword>
<comment type="function">
    <text evidence="1">Catalyzes the transfer of an acyl group from acyl-phosphate (acyl-PO(4)) to glycerol-3-phosphate (G3P) to form lysophosphatidic acid (LPA). This enzyme utilizes acyl-phosphate as fatty acyl donor, but not acyl-CoA or acyl-ACP.</text>
</comment>
<comment type="catalytic activity">
    <reaction evidence="1">
        <text>an acyl phosphate + sn-glycerol 3-phosphate = a 1-acyl-sn-glycero-3-phosphate + phosphate</text>
        <dbReference type="Rhea" id="RHEA:34075"/>
        <dbReference type="ChEBI" id="CHEBI:43474"/>
        <dbReference type="ChEBI" id="CHEBI:57597"/>
        <dbReference type="ChEBI" id="CHEBI:57970"/>
        <dbReference type="ChEBI" id="CHEBI:59918"/>
        <dbReference type="EC" id="2.3.1.275"/>
    </reaction>
</comment>
<comment type="pathway">
    <text evidence="1">Lipid metabolism; phospholipid metabolism.</text>
</comment>
<comment type="subunit">
    <text evidence="1">Probably interacts with PlsX.</text>
</comment>
<comment type="subcellular location">
    <subcellularLocation>
        <location evidence="1">Cell inner membrane</location>
        <topology evidence="1">Multi-pass membrane protein</topology>
    </subcellularLocation>
</comment>
<comment type="similarity">
    <text evidence="1">Belongs to the PlsY family.</text>
</comment>
<feature type="chain" id="PRO_1000064193" description="Glycerol-3-phosphate acyltransferase">
    <location>
        <begin position="1"/>
        <end position="218"/>
    </location>
</feature>
<feature type="transmembrane region" description="Helical" evidence="1">
    <location>
        <begin position="3"/>
        <end position="23"/>
    </location>
</feature>
<feature type="transmembrane region" description="Helical" evidence="1">
    <location>
        <begin position="53"/>
        <end position="73"/>
    </location>
</feature>
<feature type="transmembrane region" description="Helical" evidence="1">
    <location>
        <begin position="82"/>
        <end position="102"/>
    </location>
</feature>
<feature type="transmembrane region" description="Helical" evidence="1">
    <location>
        <begin position="112"/>
        <end position="132"/>
    </location>
</feature>
<feature type="transmembrane region" description="Helical" evidence="1">
    <location>
        <begin position="142"/>
        <end position="162"/>
    </location>
</feature>
<feature type="transmembrane region" description="Helical" evidence="1">
    <location>
        <begin position="166"/>
        <end position="186"/>
    </location>
</feature>
<organism>
    <name type="scientific">Leptospira borgpetersenii serovar Hardjo-bovis (strain JB197)</name>
    <dbReference type="NCBI Taxonomy" id="355277"/>
    <lineage>
        <taxon>Bacteria</taxon>
        <taxon>Pseudomonadati</taxon>
        <taxon>Spirochaetota</taxon>
        <taxon>Spirochaetia</taxon>
        <taxon>Leptospirales</taxon>
        <taxon>Leptospiraceae</taxon>
        <taxon>Leptospira</taxon>
    </lineage>
</organism>
<name>PLSY_LEPBJ</name>
<sequence>MNFAIFAFLSFISGSIPFGYWIALRFGKMDIRKFGSKNIGATNVGRSIGWKFGFPVLVLDVAKGIFPVYLSGIYIPEGGVPFQLACGVLAVLGHMFSPFLGFKGGKGVATTLGVFLVLTPIACFGAIFVFLVTIKYFKFVSIGSIFASLTLPLVYAFSSILLLHEEVSYWILGTMVFISIGIILTHRENIFRILNRSELFAVKNEDEERNGDSERNRR</sequence>
<evidence type="ECO:0000255" key="1">
    <source>
        <dbReference type="HAMAP-Rule" id="MF_01043"/>
    </source>
</evidence>
<gene>
    <name evidence="1" type="primary">plsY</name>
    <name type="ordered locus">LBJ_1035</name>
</gene>
<accession>Q04TV3</accession>
<reference key="1">
    <citation type="journal article" date="2006" name="Proc. Natl. Acad. Sci. U.S.A.">
        <title>Genome reduction in Leptospira borgpetersenii reflects limited transmission potential.</title>
        <authorList>
            <person name="Bulach D.M."/>
            <person name="Zuerner R.L."/>
            <person name="Wilson P."/>
            <person name="Seemann T."/>
            <person name="McGrath A."/>
            <person name="Cullen P.A."/>
            <person name="Davis J."/>
            <person name="Johnson M."/>
            <person name="Kuczek E."/>
            <person name="Alt D.P."/>
            <person name="Peterson-Burch B."/>
            <person name="Coppel R.L."/>
            <person name="Rood J.I."/>
            <person name="Davies J.K."/>
            <person name="Adler B."/>
        </authorList>
    </citation>
    <scope>NUCLEOTIDE SEQUENCE [LARGE SCALE GENOMIC DNA]</scope>
    <source>
        <strain>JB197</strain>
    </source>
</reference>
<protein>
    <recommendedName>
        <fullName evidence="1">Glycerol-3-phosphate acyltransferase</fullName>
    </recommendedName>
    <alternativeName>
        <fullName evidence="1">Acyl-PO4 G3P acyltransferase</fullName>
    </alternativeName>
    <alternativeName>
        <fullName evidence="1">Acyl-phosphate--glycerol-3-phosphate acyltransferase</fullName>
    </alternativeName>
    <alternativeName>
        <fullName evidence="1">G3P acyltransferase</fullName>
        <shortName evidence="1">GPAT</shortName>
        <ecNumber evidence="1">2.3.1.275</ecNumber>
    </alternativeName>
    <alternativeName>
        <fullName evidence="1">Lysophosphatidic acid synthase</fullName>
        <shortName evidence="1">LPA synthase</shortName>
    </alternativeName>
</protein>